<keyword id="KW-0002">3D-structure</keyword>
<keyword id="KW-0024">Alternative initiation</keyword>
<keyword id="KW-0046">Antibiotic resistance</keyword>
<keyword id="KW-0121">Carboxypeptidase</keyword>
<keyword id="KW-0997">Cell inner membrane</keyword>
<keyword id="KW-1003">Cell membrane</keyword>
<keyword id="KW-0133">Cell shape</keyword>
<keyword id="KW-0961">Cell wall biogenesis/degradation</keyword>
<keyword id="KW-0903">Direct protein sequencing</keyword>
<keyword id="KW-0328">Glycosyltransferase</keyword>
<keyword id="KW-0378">Hydrolase</keyword>
<keyword id="KW-0472">Membrane</keyword>
<keyword id="KW-0511">Multifunctional enzyme</keyword>
<keyword id="KW-0573">Peptidoglycan synthesis</keyword>
<keyword id="KW-0645">Protease</keyword>
<keyword id="KW-1185">Reference proteome</keyword>
<keyword id="KW-0735">Signal-anchor</keyword>
<keyword id="KW-0808">Transferase</keyword>
<keyword id="KW-0812">Transmembrane</keyword>
<keyword id="KW-1133">Transmembrane helix</keyword>
<feature type="chain" id="PRO_0000012145" description="Penicillin-binding protein 1B">
    <location>
        <begin position="1"/>
        <end position="844"/>
    </location>
</feature>
<feature type="topological domain" description="Cytoplasmic" evidence="6">
    <location>
        <begin position="1"/>
        <end position="63"/>
    </location>
</feature>
<feature type="transmembrane region" description="Helical; Signal-anchor for type II membrane protein" evidence="6">
    <location>
        <begin position="64"/>
        <end position="87"/>
    </location>
</feature>
<feature type="topological domain" description="Periplasmic" evidence="6">
    <location>
        <begin position="88"/>
        <end position="844"/>
    </location>
</feature>
<feature type="region of interest" description="Disordered" evidence="1">
    <location>
        <begin position="1"/>
        <end position="60"/>
    </location>
</feature>
<feature type="region of interest" description="Membrane association">
    <location>
        <begin position="88"/>
        <end position="250"/>
    </location>
</feature>
<feature type="region of interest" description="UvrB domain 2 homolog">
    <location>
        <begin position="109"/>
        <end position="200"/>
    </location>
</feature>
<feature type="region of interest" description="Transglycosylase">
    <location>
        <begin position="195"/>
        <end position="367"/>
    </location>
</feature>
<feature type="region of interest" description="Transpeptidase">
    <location>
        <begin position="444"/>
        <end position="736"/>
    </location>
</feature>
<feature type="region of interest" description="Disordered" evidence="1">
    <location>
        <begin position="793"/>
        <end position="835"/>
    </location>
</feature>
<feature type="compositionally biased region" description="Basic and acidic residues" evidence="1">
    <location>
        <begin position="1"/>
        <end position="10"/>
    </location>
</feature>
<feature type="compositionally biased region" description="Basic residues" evidence="1">
    <location>
        <begin position="11"/>
        <end position="25"/>
    </location>
</feature>
<feature type="compositionally biased region" description="Acidic residues" evidence="1">
    <location>
        <begin position="30"/>
        <end position="44"/>
    </location>
</feature>
<feature type="compositionally biased region" description="Basic residues" evidence="1">
    <location>
        <begin position="48"/>
        <end position="60"/>
    </location>
</feature>
<feature type="compositionally biased region" description="Low complexity" evidence="1">
    <location>
        <begin position="793"/>
        <end position="825"/>
    </location>
</feature>
<feature type="active site" description="Proton donor; for transglycosylase activity" evidence="7">
    <location>
        <position position="233"/>
    </location>
</feature>
<feature type="active site" description="Acyl-ester intermediate; for transpeptidase activity" evidence="3">
    <location>
        <position position="510"/>
    </location>
</feature>
<feature type="splice variant" id="VSP_018737" description="In isoform Gamma." evidence="6">
    <location>
        <begin position="1"/>
        <end position="45"/>
    </location>
</feature>
<feature type="mutagenesis site" description="Loss of wild-type glycan chain elongation activity. No complementation in strain defective in PBP-1b." evidence="3">
    <original>E</original>
    <variation>Q</variation>
    <location>
        <position position="233"/>
    </location>
</feature>
<feature type="mutagenesis site" description="7-fold decrease in catalytic activity. No complementation in strain defective in PBP-1b." evidence="3">
    <original>D</original>
    <variation>N</variation>
    <location>
        <position position="234"/>
    </location>
</feature>
<feature type="mutagenesis site" description="11-fold decrease in catalytic activity. Shows complementation activity in strain defective in PBP-1b." evidence="3">
    <original>E</original>
    <variation>Q</variation>
    <location>
        <position position="290"/>
    </location>
</feature>
<feature type="sequence conflict" description="In Ref. 1; CAA26098/CAA26099." evidence="6" ref="1">
    <original>P</original>
    <variation>A</variation>
    <location>
        <position position="103"/>
    </location>
</feature>
<feature type="turn" evidence="12">
    <location>
        <begin position="69"/>
        <end position="72"/>
    </location>
</feature>
<feature type="helix" evidence="13">
    <location>
        <begin position="76"/>
        <end position="88"/>
    </location>
</feature>
<feature type="helix" evidence="13">
    <location>
        <begin position="90"/>
        <end position="93"/>
    </location>
</feature>
<feature type="strand" evidence="13">
    <location>
        <begin position="104"/>
        <end position="107"/>
    </location>
</feature>
<feature type="strand" evidence="15">
    <location>
        <begin position="111"/>
        <end position="113"/>
    </location>
</feature>
<feature type="strand" evidence="18">
    <location>
        <begin position="115"/>
        <end position="117"/>
    </location>
</feature>
<feature type="helix" evidence="13">
    <location>
        <begin position="121"/>
        <end position="130"/>
    </location>
</feature>
<feature type="strand" evidence="13">
    <location>
        <begin position="144"/>
        <end position="148"/>
    </location>
</feature>
<feature type="strand" evidence="13">
    <location>
        <begin position="151"/>
        <end position="156"/>
    </location>
</feature>
<feature type="strand" evidence="13">
    <location>
        <begin position="159"/>
        <end position="161"/>
    </location>
</feature>
<feature type="strand" evidence="13">
    <location>
        <begin position="164"/>
        <end position="166"/>
    </location>
</feature>
<feature type="strand" evidence="13">
    <location>
        <begin position="169"/>
        <end position="176"/>
    </location>
</feature>
<feature type="strand" evidence="13">
    <location>
        <begin position="179"/>
        <end position="185"/>
    </location>
</feature>
<feature type="turn" evidence="13">
    <location>
        <begin position="186"/>
        <end position="189"/>
    </location>
</feature>
<feature type="strand" evidence="13">
    <location>
        <begin position="193"/>
        <end position="196"/>
    </location>
</feature>
<feature type="strand" evidence="13">
    <location>
        <begin position="201"/>
        <end position="205"/>
    </location>
</feature>
<feature type="strand" evidence="13">
    <location>
        <begin position="210"/>
        <end position="212"/>
    </location>
</feature>
<feature type="helix" evidence="17">
    <location>
        <begin position="218"/>
        <end position="220"/>
    </location>
</feature>
<feature type="helix" evidence="13">
    <location>
        <begin position="223"/>
        <end position="231"/>
    </location>
</feature>
<feature type="strand" evidence="13">
    <location>
        <begin position="234"/>
        <end position="236"/>
    </location>
</feature>
<feature type="strand" evidence="12">
    <location>
        <begin position="237"/>
        <end position="239"/>
    </location>
</feature>
<feature type="helix" evidence="12">
    <location>
        <begin position="241"/>
        <end position="243"/>
    </location>
</feature>
<feature type="turn" evidence="13">
    <location>
        <begin position="247"/>
        <end position="249"/>
    </location>
</feature>
<feature type="helix" evidence="13">
    <location>
        <begin position="268"/>
        <end position="276"/>
    </location>
</feature>
<feature type="strand" evidence="14">
    <location>
        <begin position="280"/>
        <end position="282"/>
    </location>
</feature>
<feature type="helix" evidence="13">
    <location>
        <begin position="284"/>
        <end position="300"/>
    </location>
</feature>
<feature type="helix" evidence="13">
    <location>
        <begin position="303"/>
        <end position="310"/>
    </location>
</feature>
<feature type="turn" evidence="13">
    <location>
        <begin position="311"/>
        <end position="313"/>
    </location>
</feature>
<feature type="strand" evidence="13">
    <location>
        <begin position="314"/>
        <end position="319"/>
    </location>
</feature>
<feature type="strand" evidence="13">
    <location>
        <begin position="322"/>
        <end position="326"/>
    </location>
</feature>
<feature type="helix" evidence="13">
    <location>
        <begin position="327"/>
        <end position="335"/>
    </location>
</feature>
<feature type="helix" evidence="13">
    <location>
        <begin position="339"/>
        <end position="341"/>
    </location>
</feature>
<feature type="helix" evidence="13">
    <location>
        <begin position="344"/>
        <end position="355"/>
    </location>
</feature>
<feature type="strand" evidence="13">
    <location>
        <begin position="356"/>
        <end position="360"/>
    </location>
</feature>
<feature type="turn" evidence="13">
    <location>
        <begin position="362"/>
        <end position="364"/>
    </location>
</feature>
<feature type="helix" evidence="13">
    <location>
        <begin position="366"/>
        <end position="382"/>
    </location>
</feature>
<feature type="strand" evidence="16">
    <location>
        <begin position="383"/>
        <end position="385"/>
    </location>
</feature>
<feature type="helix" evidence="13">
    <location>
        <begin position="388"/>
        <end position="395"/>
    </location>
</feature>
<feature type="strand" evidence="13">
    <location>
        <begin position="408"/>
        <end position="411"/>
    </location>
</feature>
<feature type="helix" evidence="13">
    <location>
        <begin position="412"/>
        <end position="426"/>
    </location>
</feature>
<feature type="turn" evidence="17">
    <location>
        <begin position="430"/>
        <end position="432"/>
    </location>
</feature>
<feature type="strand" evidence="13">
    <location>
        <begin position="433"/>
        <end position="435"/>
    </location>
</feature>
<feature type="strand" evidence="13">
    <location>
        <begin position="437"/>
        <end position="440"/>
    </location>
</feature>
<feature type="helix" evidence="13">
    <location>
        <begin position="444"/>
        <end position="464"/>
    </location>
</feature>
<feature type="strand" evidence="13">
    <location>
        <begin position="471"/>
        <end position="478"/>
    </location>
</feature>
<feature type="turn" evidence="13">
    <location>
        <begin position="479"/>
        <end position="481"/>
    </location>
</feature>
<feature type="strand" evidence="13">
    <location>
        <begin position="483"/>
        <end position="488"/>
    </location>
</feature>
<feature type="strand" evidence="15">
    <location>
        <begin position="490"/>
        <end position="492"/>
    </location>
</feature>
<feature type="strand" evidence="17">
    <location>
        <begin position="493"/>
        <end position="495"/>
    </location>
</feature>
<feature type="helix" evidence="13">
    <location>
        <begin position="500"/>
        <end position="503"/>
    </location>
</feature>
<feature type="helix" evidence="13">
    <location>
        <begin position="509"/>
        <end position="512"/>
    </location>
</feature>
<feature type="helix" evidence="13">
    <location>
        <begin position="513"/>
        <end position="521"/>
    </location>
</feature>
<feature type="turn" evidence="13">
    <location>
        <begin position="524"/>
        <end position="526"/>
    </location>
</feature>
<feature type="strand" evidence="13">
    <location>
        <begin position="532"/>
        <end position="534"/>
    </location>
</feature>
<feature type="strand" evidence="15">
    <location>
        <begin position="540"/>
        <end position="542"/>
    </location>
</feature>
<feature type="strand" evidence="13">
    <location>
        <begin position="543"/>
        <end position="545"/>
    </location>
</feature>
<feature type="strand" evidence="15">
    <location>
        <begin position="546"/>
        <end position="548"/>
    </location>
</feature>
<feature type="strand" evidence="13">
    <location>
        <begin position="561"/>
        <end position="564"/>
    </location>
</feature>
<feature type="helix" evidence="13">
    <location>
        <begin position="565"/>
        <end position="570"/>
    </location>
</feature>
<feature type="helix" evidence="13">
    <location>
        <begin position="574"/>
        <end position="584"/>
    </location>
</feature>
<feature type="helix" evidence="13">
    <location>
        <begin position="586"/>
        <end position="596"/>
    </location>
</feature>
<feature type="helix" evidence="13">
    <location>
        <begin position="600"/>
        <end position="602"/>
    </location>
</feature>
<feature type="helix" evidence="13">
    <location>
        <begin position="607"/>
        <end position="611"/>
    </location>
</feature>
<feature type="helix" evidence="13">
    <location>
        <begin position="618"/>
        <end position="629"/>
    </location>
</feature>
<feature type="strand" evidence="13">
    <location>
        <begin position="632"/>
        <end position="634"/>
    </location>
</feature>
<feature type="strand" evidence="13">
    <location>
        <begin position="640"/>
        <end position="644"/>
    </location>
</feature>
<feature type="strand" evidence="12">
    <location>
        <begin position="646"/>
        <end position="648"/>
    </location>
</feature>
<feature type="strand" evidence="13">
    <location>
        <begin position="650"/>
        <end position="653"/>
    </location>
</feature>
<feature type="helix" evidence="13">
    <location>
        <begin position="664"/>
        <end position="679"/>
    </location>
</feature>
<feature type="helix" evidence="13">
    <location>
        <begin position="684"/>
        <end position="689"/>
    </location>
</feature>
<feature type="helix" evidence="13">
    <location>
        <begin position="691"/>
        <end position="693"/>
    </location>
</feature>
<feature type="strand" evidence="13">
    <location>
        <begin position="696"/>
        <end position="701"/>
    </location>
</feature>
<feature type="helix" evidence="13">
    <location>
        <begin position="703"/>
        <end position="705"/>
    </location>
</feature>
<feature type="strand" evidence="13">
    <location>
        <begin position="706"/>
        <end position="713"/>
    </location>
</feature>
<feature type="strand" evidence="13">
    <location>
        <begin position="715"/>
        <end position="724"/>
    </location>
</feature>
<feature type="helix" evidence="13">
    <location>
        <begin position="737"/>
        <end position="749"/>
    </location>
</feature>
<feature type="strand" evidence="13">
    <location>
        <begin position="763"/>
        <end position="768"/>
    </location>
</feature>
<feature type="strand" evidence="13">
    <location>
        <begin position="774"/>
        <end position="777"/>
    </location>
</feature>
<feature type="strand" evidence="13">
    <location>
        <begin position="780"/>
        <end position="786"/>
    </location>
</feature>
<feature type="helix" evidence="13">
    <location>
        <begin position="792"/>
        <end position="797"/>
    </location>
</feature>
<dbReference type="EC" id="2.4.99.28" evidence="4 5"/>
<dbReference type="EC" id="3.4.16.4" evidence="5"/>
<dbReference type="EMBL" id="X02163">
    <property type="protein sequence ID" value="CAA26098.1"/>
    <property type="molecule type" value="Genomic_DNA"/>
</dbReference>
<dbReference type="EMBL" id="X02163">
    <property type="protein sequence ID" value="CAA26099.1"/>
    <property type="status" value="ALT_INIT"/>
    <property type="molecule type" value="Genomic_DNA"/>
</dbReference>
<dbReference type="EMBL" id="U00096">
    <property type="protein sequence ID" value="AAC73260.1"/>
    <property type="molecule type" value="Genomic_DNA"/>
</dbReference>
<dbReference type="EMBL" id="U00096">
    <property type="protein sequence ID" value="QNV50512.1"/>
    <property type="molecule type" value="Genomic_DNA"/>
</dbReference>
<dbReference type="EMBL" id="AP009048">
    <property type="protein sequence ID" value="BAB96725.2"/>
    <property type="molecule type" value="Genomic_DNA"/>
</dbReference>
<dbReference type="PIR" id="E64738">
    <property type="entry name" value="ZPECPB"/>
</dbReference>
<dbReference type="RefSeq" id="NP_414691.1">
    <property type="nucleotide sequence ID" value="NC_000913.3"/>
</dbReference>
<dbReference type="RefSeq" id="WP_000918162.1">
    <property type="nucleotide sequence ID" value="NZ_STEB01000032.1"/>
</dbReference>
<dbReference type="PDB" id="3FWL">
    <property type="method" value="X-ray"/>
    <property type="resolution" value="3.09 A"/>
    <property type="chains" value="A=58-804"/>
</dbReference>
<dbReference type="PDB" id="3VMA">
    <property type="method" value="X-ray"/>
    <property type="resolution" value="2.16 A"/>
    <property type="chains" value="A=58-804"/>
</dbReference>
<dbReference type="PDB" id="5FGZ">
    <property type="method" value="X-ray"/>
    <property type="resolution" value="2.85 A"/>
    <property type="chains" value="A=58-804"/>
</dbReference>
<dbReference type="PDB" id="5HL9">
    <property type="method" value="X-ray"/>
    <property type="resolution" value="2.70 A"/>
    <property type="chains" value="A=58-804"/>
</dbReference>
<dbReference type="PDB" id="5HLA">
    <property type="method" value="X-ray"/>
    <property type="resolution" value="2.36 A"/>
    <property type="chains" value="A=58-804"/>
</dbReference>
<dbReference type="PDB" id="5HLB">
    <property type="method" value="X-ray"/>
    <property type="resolution" value="2.42 A"/>
    <property type="chains" value="A=58-804"/>
</dbReference>
<dbReference type="PDB" id="5HLD">
    <property type="method" value="X-ray"/>
    <property type="resolution" value="2.31 A"/>
    <property type="chains" value="A=58-804"/>
</dbReference>
<dbReference type="PDB" id="6FZK">
    <property type="method" value="NMR"/>
    <property type="chains" value="A=108-200"/>
</dbReference>
<dbReference type="PDB" id="6G5R">
    <property type="method" value="NMR"/>
    <property type="chains" value="A=108-200"/>
</dbReference>
<dbReference type="PDB" id="6YN0">
    <property type="method" value="X-ray"/>
    <property type="resolution" value="2.40 A"/>
    <property type="chains" value="A=58-804"/>
</dbReference>
<dbReference type="PDB" id="7LQ6">
    <property type="method" value="EM"/>
    <property type="resolution" value="3.28 A"/>
    <property type="chains" value="A=58-804"/>
</dbReference>
<dbReference type="PDBsum" id="3FWL"/>
<dbReference type="PDBsum" id="3VMA"/>
<dbReference type="PDBsum" id="5FGZ"/>
<dbReference type="PDBsum" id="5HL9"/>
<dbReference type="PDBsum" id="5HLA"/>
<dbReference type="PDBsum" id="5HLB"/>
<dbReference type="PDBsum" id="5HLD"/>
<dbReference type="PDBsum" id="6FZK"/>
<dbReference type="PDBsum" id="6G5R"/>
<dbReference type="PDBsum" id="6YN0"/>
<dbReference type="PDBsum" id="7LQ6"/>
<dbReference type="EMDB" id="EMD-23482"/>
<dbReference type="SMR" id="P02919"/>
<dbReference type="BioGRID" id="4260880">
    <property type="interactions" value="262"/>
</dbReference>
<dbReference type="DIP" id="DIP-10252N"/>
<dbReference type="FunCoup" id="P02919">
    <property type="interactions" value="297"/>
</dbReference>
<dbReference type="IntAct" id="P02919">
    <property type="interactions" value="15"/>
</dbReference>
<dbReference type="STRING" id="511145.b0149"/>
<dbReference type="BindingDB" id="P02919"/>
<dbReference type="ChEMBL" id="CHEMBL1814"/>
<dbReference type="DrugBank" id="DB01602">
    <property type="generic name" value="Bacampicillin"/>
</dbReference>
<dbReference type="DrugBank" id="DB01053">
    <property type="generic name" value="Benzylpenicillin"/>
</dbReference>
<dbReference type="DrugBank" id="DB00578">
    <property type="generic name" value="Carbenicillin"/>
</dbReference>
<dbReference type="DrugBank" id="DB09319">
    <property type="generic name" value="Carindacillin"/>
</dbReference>
<dbReference type="DrugBank" id="DB01414">
    <property type="generic name" value="Cefacetrile"/>
</dbReference>
<dbReference type="DrugBank" id="DB01327">
    <property type="generic name" value="Cefazolin"/>
</dbReference>
<dbReference type="DrugBank" id="DB01413">
    <property type="generic name" value="Cefepime"/>
</dbReference>
<dbReference type="DrugBank" id="DB00671">
    <property type="generic name" value="Cefixime"/>
</dbReference>
<dbReference type="DrugBank" id="DB00274">
    <property type="generic name" value="Cefmetazole"/>
</dbReference>
<dbReference type="DrugBank" id="DB01328">
    <property type="generic name" value="Cefonicid"/>
</dbReference>
<dbReference type="DrugBank" id="DB01329">
    <property type="generic name" value="Cefoperazone"/>
</dbReference>
<dbReference type="DrugBank" id="DB01331">
    <property type="generic name" value="Cefoxitin"/>
</dbReference>
<dbReference type="DrugBank" id="DB00430">
    <property type="generic name" value="Cefpiramide"/>
</dbReference>
<dbReference type="DrugBank" id="DB11367">
    <property type="generic name" value="Cefroxadine"/>
</dbReference>
<dbReference type="DrugBank" id="DB06590">
    <property type="generic name" value="Ceftaroline fosamil"/>
</dbReference>
<dbReference type="DrugBank" id="DB00438">
    <property type="generic name" value="Ceftazidime"/>
</dbReference>
<dbReference type="DrugBank" id="DB01415">
    <property type="generic name" value="Ceftibuten"/>
</dbReference>
<dbReference type="DrugBank" id="DB01332">
    <property type="generic name" value="Ceftizoxime"/>
</dbReference>
<dbReference type="DrugBank" id="DB09050">
    <property type="generic name" value="Ceftolozane"/>
</dbReference>
<dbReference type="DrugBank" id="DB00689">
    <property type="generic name" value="Cephaloglycin"/>
</dbReference>
<dbReference type="DrugBank" id="DB01000">
    <property type="generic name" value="Cyclacillin"/>
</dbReference>
<dbReference type="DrugBank" id="DB06211">
    <property type="generic name" value="Doripenem"/>
</dbReference>
<dbReference type="DrugBank" id="DB00303">
    <property type="generic name" value="Ertapenem"/>
</dbReference>
<dbReference type="DrugBank" id="DB01598">
    <property type="generic name" value="Imipenem"/>
</dbReference>
<dbReference type="DrugBank" id="DB04570">
    <property type="generic name" value="Latamoxef"/>
</dbReference>
<dbReference type="DrugBank" id="DB09320">
    <property type="generic name" value="Procaine benzylpenicillin"/>
</dbReference>
<dbReference type="DrugBank" id="DB16335">
    <property type="generic name" value="Sulopenem etzadroxil"/>
</dbReference>
<dbReference type="DrugCentral" id="P02919"/>
<dbReference type="CAZy" id="GT51">
    <property type="family name" value="Glycosyltransferase Family 51"/>
</dbReference>
<dbReference type="jPOST" id="P02919"/>
<dbReference type="PaxDb" id="511145-b0149"/>
<dbReference type="EnsemblBacteria" id="AAC73260">
    <property type="protein sequence ID" value="AAC73260"/>
    <property type="gene ID" value="b0149"/>
</dbReference>
<dbReference type="GeneID" id="944843"/>
<dbReference type="KEGG" id="ecj:JW0145"/>
<dbReference type="KEGG" id="eco:b0149"/>
<dbReference type="KEGG" id="ecoc:C3026_00655"/>
<dbReference type="PATRIC" id="fig|1411691.4.peg.2132"/>
<dbReference type="EchoBASE" id="EB0600"/>
<dbReference type="eggNOG" id="COG0744">
    <property type="taxonomic scope" value="Bacteria"/>
</dbReference>
<dbReference type="HOGENOM" id="CLU_006354_2_7_6"/>
<dbReference type="InParanoid" id="P02919"/>
<dbReference type="OMA" id="LERQYTK"/>
<dbReference type="OrthoDB" id="9766909at2"/>
<dbReference type="PhylomeDB" id="P02919"/>
<dbReference type="BioCyc" id="EcoCyc:EG10605-MONOMER"/>
<dbReference type="BioCyc" id="MetaCyc:EG10605-MONOMER"/>
<dbReference type="BRENDA" id="2.4.1.129">
    <property type="organism ID" value="2026"/>
</dbReference>
<dbReference type="UniPathway" id="UPA00219"/>
<dbReference type="EvolutionaryTrace" id="P02919"/>
<dbReference type="PRO" id="PR:P02919"/>
<dbReference type="Proteomes" id="UP000000625">
    <property type="component" value="Chromosome"/>
</dbReference>
<dbReference type="GO" id="GO:0016020">
    <property type="term" value="C:membrane"/>
    <property type="evidence" value="ECO:0007005"/>
    <property type="project" value="UniProtKB"/>
</dbReference>
<dbReference type="GO" id="GO:0030288">
    <property type="term" value="C:outer membrane-bounded periplasmic space"/>
    <property type="evidence" value="ECO:0000314"/>
    <property type="project" value="EcoCyc"/>
</dbReference>
<dbReference type="GO" id="GO:0009274">
    <property type="term" value="C:peptidoglycan-based cell wall"/>
    <property type="evidence" value="ECO:0007669"/>
    <property type="project" value="InterPro"/>
</dbReference>
<dbReference type="GO" id="GO:0005886">
    <property type="term" value="C:plasma membrane"/>
    <property type="evidence" value="ECO:0000314"/>
    <property type="project" value="EcoCyc"/>
</dbReference>
<dbReference type="GO" id="GO:0008658">
    <property type="term" value="F:penicillin binding"/>
    <property type="evidence" value="ECO:0000314"/>
    <property type="project" value="EcoCyc"/>
</dbReference>
<dbReference type="GO" id="GO:0008955">
    <property type="term" value="F:peptidoglycan glycosyltransferase activity"/>
    <property type="evidence" value="ECO:0000314"/>
    <property type="project" value="EcoCyc"/>
</dbReference>
<dbReference type="GO" id="GO:0009002">
    <property type="term" value="F:serine-type D-Ala-D-Ala carboxypeptidase activity"/>
    <property type="evidence" value="ECO:0000314"/>
    <property type="project" value="EcoCyc"/>
</dbReference>
<dbReference type="GO" id="GO:0071433">
    <property type="term" value="P:cell wall repair"/>
    <property type="evidence" value="ECO:0000314"/>
    <property type="project" value="EcoCyc"/>
</dbReference>
<dbReference type="GO" id="GO:0009252">
    <property type="term" value="P:peptidoglycan biosynthetic process"/>
    <property type="evidence" value="ECO:0000314"/>
    <property type="project" value="EcoCyc"/>
</dbReference>
<dbReference type="GO" id="GO:0051518">
    <property type="term" value="P:positive regulation of bipolar cell growth"/>
    <property type="evidence" value="ECO:0000314"/>
    <property type="project" value="EcoliWiki"/>
</dbReference>
<dbReference type="GO" id="GO:0006508">
    <property type="term" value="P:proteolysis"/>
    <property type="evidence" value="ECO:0007669"/>
    <property type="project" value="UniProtKB-KW"/>
</dbReference>
<dbReference type="GO" id="GO:0008360">
    <property type="term" value="P:regulation of cell shape"/>
    <property type="evidence" value="ECO:0007669"/>
    <property type="project" value="UniProtKB-KW"/>
</dbReference>
<dbReference type="GO" id="GO:0046677">
    <property type="term" value="P:response to antibiotic"/>
    <property type="evidence" value="ECO:0000315"/>
    <property type="project" value="EcoCyc"/>
</dbReference>
<dbReference type="FunFam" id="1.10.3810.10:FF:000002">
    <property type="entry name" value="Penicillin-binding protein 1B"/>
    <property type="match status" value="1"/>
</dbReference>
<dbReference type="FunFam" id="3.30.2060.10:FF:000001">
    <property type="entry name" value="Penicillin-binding protein 1B"/>
    <property type="match status" value="1"/>
</dbReference>
<dbReference type="FunFam" id="3.40.710.10:FF:000006">
    <property type="entry name" value="Penicillin-binding protein 1B"/>
    <property type="match status" value="1"/>
</dbReference>
<dbReference type="Gene3D" id="1.10.3810.10">
    <property type="entry name" value="Biosynthetic peptidoglycan transglycosylase-like"/>
    <property type="match status" value="1"/>
</dbReference>
<dbReference type="Gene3D" id="1.20.5.100">
    <property type="entry name" value="Cytochrome c1, transmembrane anchor, C-terminal"/>
    <property type="match status" value="1"/>
</dbReference>
<dbReference type="Gene3D" id="3.40.710.10">
    <property type="entry name" value="DD-peptidase/beta-lactamase superfamily"/>
    <property type="match status" value="1"/>
</dbReference>
<dbReference type="Gene3D" id="3.30.2060.10">
    <property type="entry name" value="Penicillin-binding protein 1b domain"/>
    <property type="match status" value="1"/>
</dbReference>
<dbReference type="InterPro" id="IPR012338">
    <property type="entry name" value="Beta-lactam/transpept-like"/>
</dbReference>
<dbReference type="InterPro" id="IPR001264">
    <property type="entry name" value="Glyco_trans_51"/>
</dbReference>
<dbReference type="InterPro" id="IPR050396">
    <property type="entry name" value="Glycosyltr_51/Transpeptidase"/>
</dbReference>
<dbReference type="InterPro" id="IPR023346">
    <property type="entry name" value="Lysozyme-like_dom_sf"/>
</dbReference>
<dbReference type="InterPro" id="IPR032730">
    <property type="entry name" value="PBP1b_TM"/>
</dbReference>
<dbReference type="InterPro" id="IPR011813">
    <property type="entry name" value="PBP_1b"/>
</dbReference>
<dbReference type="InterPro" id="IPR036950">
    <property type="entry name" value="PBP_transglycosylase"/>
</dbReference>
<dbReference type="InterPro" id="IPR001460">
    <property type="entry name" value="PCN-bd_Tpept"/>
</dbReference>
<dbReference type="InterPro" id="IPR028166">
    <property type="entry name" value="UB2H"/>
</dbReference>
<dbReference type="NCBIfam" id="TIGR02071">
    <property type="entry name" value="PBP_1b"/>
    <property type="match status" value="1"/>
</dbReference>
<dbReference type="NCBIfam" id="NF007061">
    <property type="entry name" value="PRK09506.1"/>
    <property type="match status" value="1"/>
</dbReference>
<dbReference type="PANTHER" id="PTHR32282">
    <property type="entry name" value="BINDING PROTEIN TRANSPEPTIDASE, PUTATIVE-RELATED"/>
    <property type="match status" value="1"/>
</dbReference>
<dbReference type="PANTHER" id="PTHR32282:SF11">
    <property type="entry name" value="PENICILLIN-BINDING PROTEIN 1B"/>
    <property type="match status" value="1"/>
</dbReference>
<dbReference type="Pfam" id="PF14812">
    <property type="entry name" value="PBP1_TM"/>
    <property type="match status" value="1"/>
</dbReference>
<dbReference type="Pfam" id="PF00912">
    <property type="entry name" value="Transgly"/>
    <property type="match status" value="1"/>
</dbReference>
<dbReference type="Pfam" id="PF00905">
    <property type="entry name" value="Transpeptidase"/>
    <property type="match status" value="1"/>
</dbReference>
<dbReference type="Pfam" id="PF14814">
    <property type="entry name" value="UB2H"/>
    <property type="match status" value="1"/>
</dbReference>
<dbReference type="PIRSF" id="PIRSF002799">
    <property type="entry name" value="PBP_1b"/>
    <property type="match status" value="1"/>
</dbReference>
<dbReference type="SUPFAM" id="SSF56601">
    <property type="entry name" value="beta-lactamase/transpeptidase-like"/>
    <property type="match status" value="1"/>
</dbReference>
<dbReference type="SUPFAM" id="SSF53955">
    <property type="entry name" value="Lysozyme-like"/>
    <property type="match status" value="1"/>
</dbReference>
<evidence type="ECO:0000256" key="1">
    <source>
        <dbReference type="SAM" id="MobiDB-lite"/>
    </source>
</evidence>
<evidence type="ECO:0000269" key="2">
    <source>
    </source>
</evidence>
<evidence type="ECO:0000269" key="3">
    <source>
    </source>
</evidence>
<evidence type="ECO:0000269" key="4">
    <source>
    </source>
</evidence>
<evidence type="ECO:0000269" key="5">
    <source>
    </source>
</evidence>
<evidence type="ECO:0000305" key="6"/>
<evidence type="ECO:0000305" key="7">
    <source>
    </source>
</evidence>
<evidence type="ECO:0000312" key="8">
    <source>
        <dbReference type="EMBL" id="AAC73260.1"/>
    </source>
</evidence>
<evidence type="ECO:0000312" key="9">
    <source>
        <dbReference type="EMBL" id="BAB96725.2"/>
    </source>
</evidence>
<evidence type="ECO:0000312" key="10">
    <source>
        <dbReference type="EMBL" id="CAA26098.1"/>
    </source>
</evidence>
<evidence type="ECO:0000312" key="11">
    <source>
        <dbReference type="EMBL" id="CAA26099.1"/>
    </source>
</evidence>
<evidence type="ECO:0007829" key="12">
    <source>
        <dbReference type="PDB" id="3FWL"/>
    </source>
</evidence>
<evidence type="ECO:0007829" key="13">
    <source>
        <dbReference type="PDB" id="3VMA"/>
    </source>
</evidence>
<evidence type="ECO:0007829" key="14">
    <source>
        <dbReference type="PDB" id="5FGZ"/>
    </source>
</evidence>
<evidence type="ECO:0007829" key="15">
    <source>
        <dbReference type="PDB" id="5HL9"/>
    </source>
</evidence>
<evidence type="ECO:0007829" key="16">
    <source>
        <dbReference type="PDB" id="5HLB"/>
    </source>
</evidence>
<evidence type="ECO:0007829" key="17">
    <source>
        <dbReference type="PDB" id="5HLD"/>
    </source>
</evidence>
<evidence type="ECO:0007829" key="18">
    <source>
        <dbReference type="PDB" id="6FZK"/>
    </source>
</evidence>
<proteinExistence type="evidence at protein level"/>
<sequence>MAGNDREPIGRKGKPTRPVKQKVSRRRYEDDDDYDDYDDYEDEEPMPRKGKGKGKGRKPRGKRGWLWLLLKLAIVFAVLIAIYGVYLDQKIRSRIDGKVWQLPAAVYGRMVNLEPDMTISKNEMVKLLEATQYRQVSKMTRPGEFTVQANSIEMIRRPFDFPDSKEGQVRARLTFDGDHLATIVNMENNRQFGFFRLDPRLITMISSPNGEQRLFVPRSGFPDLLVDTLLATEDRHFYEHDGISLYSIGRAVLANLTAGRTVQGASTLTQQLVKNLFLSSERSYWRKANEAYMALIMDARYSKDRILELYMNEVYLGQSGDNEIRGFPLASLYYFGRPVEELSLDQQALLVGMVKGASIYNPWRNPKLALERRNLVLRLLQQQQIIDQELYDMLSARPLGVQPRGGVISPQPAFMQLVRQELQAKLGDKVKDLSGVKIFTTFDSVAQDAAEKAAVEGIPALKKQRKLSDLETAIVVVDRFSGEVRAMVGGSEPQFAGYNRAMQARRSIGSLAKPATYLTALSQPKIYRLNTWIADAPIALRQPNGQVWSPQNDDRRYSESGRVMLVDALTRSMNVPTVNLGMALGLPAVTETWIKLGVPKDQLHPVPAMLLGALNLTPIEVAQAFQTIASGGNRAPLSALRSVIAEDGKVLYQSFPQAERAVPAQAAYLTLWTMQQVVQRGTGRQLGAKYPNLHLAGKTGTTNNNVDTWFAGIDGSTVTITWVGRDNNQPTKLYGASGAMSIYQRYLANQTPTPLNLVPPEDIADMGVDYDGNFVCSGGMRILPVWTSDPQSLCQQSEMQQQPSGNPFDQSSQPQQQPQQQPAQQEQKDSDGVAGWIKDMFGSN</sequence>
<organism>
    <name type="scientific">Escherichia coli (strain K12)</name>
    <dbReference type="NCBI Taxonomy" id="83333"/>
    <lineage>
        <taxon>Bacteria</taxon>
        <taxon>Pseudomonadati</taxon>
        <taxon>Pseudomonadota</taxon>
        <taxon>Gammaproteobacteria</taxon>
        <taxon>Enterobacterales</taxon>
        <taxon>Enterobacteriaceae</taxon>
        <taxon>Escherichia</taxon>
    </lineage>
</organism>
<accession>P02919</accession>
<accession>A0A7H2C765</accession>
<accession>P75664</accession>
<protein>
    <recommendedName>
        <fullName>Penicillin-binding protein 1B</fullName>
        <shortName>PBP-1b</shortName>
        <shortName>PBP1b</shortName>
    </recommendedName>
    <alternativeName>
        <fullName>Murein polymerase</fullName>
    </alternativeName>
    <domain>
        <recommendedName>
            <fullName>Penicillin-insensitive transglycosylase</fullName>
            <ecNumber evidence="4 5">2.4.99.28</ecNumber>
        </recommendedName>
        <alternativeName>
            <fullName>Peptidoglycan TGase</fullName>
        </alternativeName>
        <alternativeName>
            <fullName>Peptidoglycan glycosyltransferase</fullName>
        </alternativeName>
    </domain>
    <domain>
        <recommendedName>
            <fullName>Penicillin-sensitive transpeptidase</fullName>
            <ecNumber evidence="5">3.4.16.4</ecNumber>
        </recommendedName>
        <alternativeName>
            <fullName>DD-transpeptidase</fullName>
        </alternativeName>
    </domain>
</protein>
<reference evidence="10 11" key="1">
    <citation type="journal article" date="1985" name="Eur. J. Biochem.">
        <title>The nucleotide sequences of the ponA and ponB genes encoding penicillin-binding protein 1A and 1B of Escherichia coli K12.</title>
        <authorList>
            <person name="Broome-Smith J.K."/>
            <person name="Edelman A."/>
            <person name="Yousif S."/>
            <person name="Spratt B.G."/>
        </authorList>
    </citation>
    <scope>NUCLEOTIDE SEQUENCE [GENOMIC DNA]</scope>
    <source>
        <strain>K12</strain>
    </source>
</reference>
<reference key="2">
    <citation type="journal article" date="1994" name="Nucleic Acids Res.">
        <title>Systematic sequencing of the Escherichia coli genome: analysis of the 2.4-4.1 min (110,917-193,643 bp) region.</title>
        <authorList>
            <person name="Fujita N."/>
            <person name="Mori H."/>
            <person name="Yura T."/>
            <person name="Ishihama A."/>
        </authorList>
    </citation>
    <scope>NUCLEOTIDE SEQUENCE [LARGE SCALE GENOMIC DNA]</scope>
    <source>
        <strain>K12 / W3110 / ATCC 27325 / DSM 5911</strain>
    </source>
</reference>
<reference evidence="8" key="3">
    <citation type="journal article" date="1997" name="Science">
        <title>The complete genome sequence of Escherichia coli K-12.</title>
        <authorList>
            <person name="Blattner F.R."/>
            <person name="Plunkett G. III"/>
            <person name="Bloch C.A."/>
            <person name="Perna N.T."/>
            <person name="Burland V."/>
            <person name="Riley M."/>
            <person name="Collado-Vides J."/>
            <person name="Glasner J.D."/>
            <person name="Rode C.K."/>
            <person name="Mayhew G.F."/>
            <person name="Gregor J."/>
            <person name="Davis N.W."/>
            <person name="Kirkpatrick H.A."/>
            <person name="Goeden M.A."/>
            <person name="Rose D.J."/>
            <person name="Mau B."/>
            <person name="Shao Y."/>
        </authorList>
    </citation>
    <scope>NUCLEOTIDE SEQUENCE [LARGE SCALE GENOMIC DNA]</scope>
    <source>
        <strain>K12 / MG1655 / ATCC 47076</strain>
    </source>
</reference>
<reference evidence="9" key="4">
    <citation type="journal article" date="2006" name="Mol. Syst. Biol.">
        <title>Highly accurate genome sequences of Escherichia coli K-12 strains MG1655 and W3110.</title>
        <authorList>
            <person name="Hayashi K."/>
            <person name="Morooka N."/>
            <person name="Yamamoto Y."/>
            <person name="Fujita K."/>
            <person name="Isono K."/>
            <person name="Choi S."/>
            <person name="Ohtsubo E."/>
            <person name="Baba T."/>
            <person name="Wanner B.L."/>
            <person name="Mori H."/>
            <person name="Horiuchi T."/>
        </authorList>
    </citation>
    <scope>NUCLEOTIDE SEQUENCE [LARGE SCALE GENOMIC DNA]</scope>
    <scope>SEQUENCE REVISION TO 103 AND 754</scope>
    <source>
        <strain>K12 / W3110 / ATCC 27325 / DSM 5911</strain>
    </source>
</reference>
<reference key="5">
    <citation type="journal article" date="1985" name="Proc. Natl. Acad. Sci. U.S.A.">
        <title>Sequences of the active-site peptides of three of the high-Mr penicillin-binding proteins of Escherichia coli K-12.</title>
        <authorList>
            <person name="Keck W."/>
            <person name="Glauner B."/>
            <person name="Schwarz U."/>
            <person name="Broome-Smith J.K."/>
            <person name="Spratt B.G."/>
        </authorList>
    </citation>
    <scope>PROTEIN SEQUENCE OF 497-525</scope>
    <source>
        <strain>K12</strain>
    </source>
</reference>
<reference key="6">
    <citation type="journal article" date="1984" name="J. Biol. Chem.">
        <title>Functional biosynthesis of cell wall peptidoglycan by polymorphic bifunctional polypeptides. Penicillin-binding protein 1Bs of Escherichia coli with activities of transglycosylase and transpeptidase.</title>
        <authorList>
            <person name="Nakagawa J."/>
            <person name="Tamaki S."/>
            <person name="Tomioka S."/>
            <person name="Matsuhashi M."/>
        </authorList>
    </citation>
    <scope>CATALYTIC ACTIVITY</scope>
</reference>
<reference key="7">
    <citation type="journal article" date="1996" name="Biochem. J.">
        <title>Localization of a putative second membrane association site in penicillin-binding protein 1B of Escherichia coli.</title>
        <authorList>
            <person name="Wang C.C."/>
            <person name="Schultz D.R."/>
            <person name="Nicholas R.A."/>
        </authorList>
    </citation>
    <scope>CHARACTERIZATION</scope>
</reference>
<reference key="8">
    <citation type="journal article" date="1997" name="J. Bacteriol.">
        <title>Topographical and functional investigation of Escherichia coli penicillin-binding protein 1b by alanine stretch scanning mutagenesis.</title>
        <authorList>
            <person name="Lefevre F."/>
            <person name="Remy M.-H."/>
            <person name="Masson J.-M."/>
        </authorList>
    </citation>
    <scope>TOPOLOGY</scope>
</reference>
<reference key="9">
    <citation type="journal article" date="1987" name="Mol. Microbiol.">
        <title>Use of a beta-lactamase fusion vector to investigate the organization of penicillin-binding protein 1B in the cytoplasmic membrane of Escherichia coli.</title>
        <authorList>
            <person name="Edelman A."/>
            <person name="Bowler L."/>
            <person name="Broome-Smith J.K."/>
            <person name="Spratt B.G."/>
        </authorList>
    </citation>
    <scope>TOPOLOGY</scope>
</reference>
<reference key="10">
    <citation type="journal article" date="1991" name="J. Bacteriol.">
        <title>Penicillin-binding protein 1B of Escherichia coli exists in dimeric forms.</title>
        <authorList>
            <person name="Zijderveld C.A."/>
            <person name="Aarsman M.E."/>
            <person name="den Blaauwen T."/>
            <person name="Nanninga N."/>
        </authorList>
    </citation>
    <scope>DIMERIZATION</scope>
</reference>
<reference key="11">
    <citation type="journal article" date="1999" name="J. Biol. Chem.">
        <title>Demonstration of molecular interactions between the murein polymerase PBP1B, the lytic transglycosylase MltA, and the scaffolding protein MipA of Escherichia coli.</title>
        <authorList>
            <person name="Vollmer W."/>
            <person name="von Rechenberg M."/>
            <person name="Hoeltje J.-V."/>
        </authorList>
    </citation>
    <scope>INTERACTION WITH MIPA AND MLTA</scope>
    <source>
        <strain>K12 / MC1061 / ATCC 53338 / DSM 7140</strain>
    </source>
</reference>
<reference key="12">
    <citation type="journal article" date="1999" name="Mol. Microbiol.">
        <title>The catalytic, glycosyl transferase and acyl transferase modules of the cell wall peptidoglycan-polymerizing penicillin-binding protein 1b of Escherichia coli.</title>
        <authorList>
            <person name="Terrak M."/>
            <person name="Ghosh T.K."/>
            <person name="van Heijenoort J."/>
            <person name="Van Beeumen J."/>
            <person name="Lampilas M."/>
            <person name="Aszodi J."/>
            <person name="Ayala J.A."/>
            <person name="Ghuysen J.-M."/>
            <person name="Nguyen-Disteche M."/>
        </authorList>
    </citation>
    <scope>ACTIVE SITE SER-510</scope>
    <scope>MUTAGENESIS OF GLU-233; ASP-234 AND GLU-290</scope>
    <source>
        <strain>EJ801</strain>
    </source>
</reference>
<reference key="13">
    <citation type="journal article" date="1998" name="Microbiol. Mol. Biol. Rev.">
        <title>Multimodular penicillin-binding proteins: an enigmatic family of orthologs and paralogs.</title>
        <authorList>
            <person name="Goffin C."/>
            <person name="Ghuysen J.-M."/>
        </authorList>
    </citation>
    <scope>REVIEW</scope>
</reference>
<reference key="14">
    <citation type="journal article" date="2009" name="Proc. Natl. Acad. Sci. U.S.A.">
        <title>Crystal structure of the membrane-bound bifunctional transglycosylase PBP1b from Escherichia coli.</title>
        <authorList>
            <person name="Sung M.-T."/>
            <person name="Lai Y.-T."/>
            <person name="Huang C.-Y."/>
            <person name="Chou L.-Y."/>
            <person name="Shih H.-W."/>
            <person name="Cheng W.-C."/>
            <person name="Wong C.-H."/>
            <person name="Ma C."/>
        </authorList>
    </citation>
    <scope>X-RAY CRYSTALLOGRAPHY (2.16 ANGSTROMS) OF 58-804 IN COMPLEX WITH MOENOMYCIN</scope>
    <scope>PARTIAL PROTEIN SEQUENCE</scope>
    <scope>INTERACTION WITH MLTA; UVRA; FTSL AND FTSN</scope>
    <scope>MEMBRANE TOPOLOGY</scope>
    <scope>CATALYTIC ACTIVITY</scope>
    <scope>DOMAIN</scope>
    <scope>IDENTIFICATION BY MASS SPECTROMETRY</scope>
</reference>
<name>PBPB_ECOLI</name>
<gene>
    <name type="primary">mrcB</name>
    <name type="synonym">pbpF</name>
    <name type="synonym">ponB</name>
    <name evidence="8" type="ordered locus">b0149</name>
    <name type="ordered locus">JW0145</name>
</gene>
<comment type="function">
    <text>Cell wall formation. Synthesis of cross-linked peptidoglycan from the lipid intermediates. The enzyme has a penicillin-insensitive transglycosylase N-terminal domain (formation of linear glycan strands) and a penicillin-sensitive transpeptidase C-terminal domain (cross-linking of the peptide subunits).</text>
</comment>
<comment type="catalytic activity">
    <reaction evidence="4 5">
        <text>[GlcNAc-(1-&gt;4)-Mur2Ac(oyl-L-Ala-gamma-D-Glu-L-Lys-D-Ala-D-Ala)](n)-di-trans,octa-cis-undecaprenyl diphosphate + beta-D-GlcNAc-(1-&gt;4)-Mur2Ac(oyl-L-Ala-gamma-D-Glu-L-Lys-D-Ala-D-Ala)-di-trans,octa-cis-undecaprenyl diphosphate = [GlcNAc-(1-&gt;4)-Mur2Ac(oyl-L-Ala-gamma-D-Glu-L-Lys-D-Ala-D-Ala)](n+1)-di-trans,octa-cis-undecaprenyl diphosphate + di-trans,octa-cis-undecaprenyl diphosphate + H(+)</text>
        <dbReference type="Rhea" id="RHEA:23708"/>
        <dbReference type="Rhea" id="RHEA-COMP:9602"/>
        <dbReference type="Rhea" id="RHEA-COMP:9603"/>
        <dbReference type="ChEBI" id="CHEBI:15378"/>
        <dbReference type="ChEBI" id="CHEBI:58405"/>
        <dbReference type="ChEBI" id="CHEBI:60033"/>
        <dbReference type="ChEBI" id="CHEBI:78435"/>
        <dbReference type="EC" id="2.4.99.28"/>
    </reaction>
</comment>
<comment type="catalytic activity">
    <reaction evidence="5">
        <text>Preferential cleavage: (Ac)2-L-Lys-D-Ala-|-D-Ala. Also transpeptidation of peptidyl-alanyl moieties that are N-acyl substituents of D-alanine.</text>
        <dbReference type="EC" id="3.4.16.4"/>
    </reaction>
</comment>
<comment type="pathway">
    <text>Cell wall biogenesis; peptidoglycan biosynthesis.</text>
</comment>
<comment type="subunit">
    <text evidence="2 4">Forms a trimeric complex with MipA and MltA. Has also been shown to exist as monomer or homodimer; homodimer of Alpha and Gamma isozymes can be found. Interacts with UvrA, FtsL and FtsN.</text>
</comment>
<comment type="interaction">
    <interactant intactId="EBI-909769">
        <id>P02919</id>
    </interactant>
    <interactant intactId="EBI-548564">
        <id>P0AD68</id>
        <label>ftsI</label>
    </interactant>
    <organismsDiffer>false</organismsDiffer>
    <experiments>3</experiments>
</comment>
<comment type="interaction">
    <interactant intactId="EBI-909769">
        <id>P02919</id>
    </interactant>
    <interactant intactId="EBI-1134233">
        <id>P29131</id>
        <label>ftsN</label>
    </interactant>
    <organismsDiffer>false</organismsDiffer>
    <experiments>7</experiments>
</comment>
<comment type="interaction">
    <interactant intactId="EBI-909769">
        <id>P02919</id>
    </interactant>
    <interactant intactId="EBI-3405489">
        <id>P0AB38</id>
        <label>lpoB</label>
    </interactant>
    <organismsDiffer>false</organismsDiffer>
    <experiments>4</experiments>
</comment>
<comment type="subcellular location">
    <subcellularLocation>
        <location>Cell inner membrane</location>
        <topology>Single-pass type II membrane protein</topology>
    </subcellularLocation>
</comment>
<comment type="alternative products">
    <event type="alternative initiation"/>
    <isoform>
        <id>P02919-1</id>
        <name>Alpha</name>
        <name>Long</name>
        <sequence type="displayed"/>
    </isoform>
    <isoform>
        <id>P02919-2</id>
        <name>Gamma</name>
        <name>Short</name>
        <sequence type="described" ref="VSP_018737"/>
    </isoform>
</comment>
<comment type="domain">
    <text evidence="4">The UvrB domain 2 homolog region (UB2H domain) is important for interaction with MltA.</text>
</comment>
<comment type="miscellaneous">
    <text>A third isozyme, Beta, lacking the first 25 N-terminal amino acids of the isoform Alpha and a fourth isozyme, Delta, have been found, but seem to result from the artifactual degradation of the isoform Alpha and isoform Gamma respectively.</text>
</comment>
<comment type="similarity">
    <text evidence="6">In the N-terminal section; belongs to the glycosyltransferase 51 family.</text>
</comment>
<comment type="similarity">
    <text evidence="6">In the C-terminal section; belongs to the transpeptidase family.</text>
</comment>
<comment type="sequence caution" evidence="6">
    <conflict type="erroneous initiation">
        <sequence resource="EMBL-CDS" id="CAA26099"/>
    </conflict>
    <text>Truncated N-terminus.</text>
</comment>